<dbReference type="EMBL" id="U57538">
    <property type="protein sequence ID" value="AAB39516.1"/>
    <property type="molecule type" value="mRNA"/>
</dbReference>
<dbReference type="SMR" id="P79798"/>
<dbReference type="GlyCosmos" id="P79798">
    <property type="glycosylation" value="2 sites, No reported glycans"/>
</dbReference>
<dbReference type="GO" id="GO:0016020">
    <property type="term" value="C:membrane"/>
    <property type="evidence" value="ECO:0000250"/>
    <property type="project" value="UniProtKB"/>
</dbReference>
<dbReference type="GO" id="GO:0097381">
    <property type="term" value="C:photoreceptor disc membrane"/>
    <property type="evidence" value="ECO:0000250"/>
    <property type="project" value="UniProtKB"/>
</dbReference>
<dbReference type="GO" id="GO:0005886">
    <property type="term" value="C:plasma membrane"/>
    <property type="evidence" value="ECO:0000250"/>
    <property type="project" value="UniProtKB"/>
</dbReference>
<dbReference type="GO" id="GO:0005502">
    <property type="term" value="F:11-cis retinal binding"/>
    <property type="evidence" value="ECO:0000250"/>
    <property type="project" value="UniProtKB"/>
</dbReference>
<dbReference type="GO" id="GO:0008020">
    <property type="term" value="F:G protein-coupled photoreceptor activity"/>
    <property type="evidence" value="ECO:0000250"/>
    <property type="project" value="UniProtKB"/>
</dbReference>
<dbReference type="GO" id="GO:0016038">
    <property type="term" value="P:absorption of visible light"/>
    <property type="evidence" value="ECO:0000250"/>
    <property type="project" value="UniProtKB"/>
</dbReference>
<dbReference type="GO" id="GO:0016056">
    <property type="term" value="P:G protein-coupled opsin signaling pathway"/>
    <property type="evidence" value="ECO:0000250"/>
    <property type="project" value="UniProtKB"/>
</dbReference>
<dbReference type="GO" id="GO:0007601">
    <property type="term" value="P:visual perception"/>
    <property type="evidence" value="ECO:0007669"/>
    <property type="project" value="UniProtKB-KW"/>
</dbReference>
<dbReference type="CDD" id="cd15080">
    <property type="entry name" value="7tmA_MWS_opsin"/>
    <property type="match status" value="1"/>
</dbReference>
<dbReference type="FunFam" id="1.20.1070.10:FF:000018">
    <property type="entry name" value="Rhodopsin"/>
    <property type="match status" value="1"/>
</dbReference>
<dbReference type="Gene3D" id="1.20.1070.10">
    <property type="entry name" value="Rhodopsin 7-helix transmembrane proteins"/>
    <property type="match status" value="1"/>
</dbReference>
<dbReference type="InterPro" id="IPR050125">
    <property type="entry name" value="GPCR_opsins"/>
</dbReference>
<dbReference type="InterPro" id="IPR000276">
    <property type="entry name" value="GPCR_Rhodpsn"/>
</dbReference>
<dbReference type="InterPro" id="IPR017452">
    <property type="entry name" value="GPCR_Rhodpsn_7TM"/>
</dbReference>
<dbReference type="InterPro" id="IPR001760">
    <property type="entry name" value="Opsin"/>
</dbReference>
<dbReference type="InterPro" id="IPR027430">
    <property type="entry name" value="Retinal_BS"/>
</dbReference>
<dbReference type="InterPro" id="IPR000732">
    <property type="entry name" value="Rhodopsin"/>
</dbReference>
<dbReference type="InterPro" id="IPR019477">
    <property type="entry name" value="Rhodopsin_N"/>
</dbReference>
<dbReference type="PANTHER" id="PTHR24240">
    <property type="entry name" value="OPSIN"/>
    <property type="match status" value="1"/>
</dbReference>
<dbReference type="Pfam" id="PF00001">
    <property type="entry name" value="7tm_1"/>
    <property type="match status" value="1"/>
</dbReference>
<dbReference type="Pfam" id="PF10413">
    <property type="entry name" value="Rhodopsin_N"/>
    <property type="match status" value="1"/>
</dbReference>
<dbReference type="PRINTS" id="PR00237">
    <property type="entry name" value="GPCRRHODOPSN"/>
</dbReference>
<dbReference type="PRINTS" id="PR00238">
    <property type="entry name" value="OPSIN"/>
</dbReference>
<dbReference type="PRINTS" id="PR00579">
    <property type="entry name" value="RHODOPSIN"/>
</dbReference>
<dbReference type="SUPFAM" id="SSF81321">
    <property type="entry name" value="Family A G protein-coupled receptor-like"/>
    <property type="match status" value="1"/>
</dbReference>
<dbReference type="PROSITE" id="PS00237">
    <property type="entry name" value="G_PROTEIN_RECEP_F1_1"/>
    <property type="match status" value="1"/>
</dbReference>
<dbReference type="PROSITE" id="PS50262">
    <property type="entry name" value="G_PROTEIN_RECEP_F1_2"/>
    <property type="match status" value="1"/>
</dbReference>
<dbReference type="PROSITE" id="PS00238">
    <property type="entry name" value="OPSIN"/>
    <property type="match status" value="1"/>
</dbReference>
<gene>
    <name type="primary">rho</name>
</gene>
<organism>
    <name type="scientific">Myripristis berndti</name>
    <name type="common">Bigscale soldierfish</name>
    <dbReference type="NCBI Taxonomy" id="47700"/>
    <lineage>
        <taxon>Eukaryota</taxon>
        <taxon>Metazoa</taxon>
        <taxon>Chordata</taxon>
        <taxon>Craniata</taxon>
        <taxon>Vertebrata</taxon>
        <taxon>Euteleostomi</taxon>
        <taxon>Actinopterygii</taxon>
        <taxon>Neopterygii</taxon>
        <taxon>Teleostei</taxon>
        <taxon>Neoteleostei</taxon>
        <taxon>Acanthomorphata</taxon>
        <taxon>Holocentriformes</taxon>
        <taxon>Holocentridae</taxon>
        <taxon>Myripristis</taxon>
    </lineage>
</organism>
<reference key="1">
    <citation type="submission" date="1997-01" db="EMBL/GenBank/DDBJ databases">
        <title>Molecular phylogeny of 11 holocentrid fishes (Order Beryciformes) inferred from rhodopsin cDNA and cytochrome b.</title>
        <authorList>
            <person name="Toller W.W."/>
            <person name="Moses K."/>
            <person name="McFall-Ngai M.J."/>
        </authorList>
    </citation>
    <scope>NUCLEOTIDE SEQUENCE [MRNA]</scope>
    <source>
        <tissue>Eye</tissue>
    </source>
</reference>
<feature type="chain" id="PRO_0000197690" description="Rhodopsin">
    <location>
        <begin position="1" status="less than"/>
        <end position="349"/>
    </location>
</feature>
<feature type="topological domain" description="Extracellular" evidence="8">
    <location>
        <begin position="1" status="less than"/>
        <end position="33"/>
    </location>
</feature>
<feature type="transmembrane region" description="Helical; Name=1" evidence="1">
    <location>
        <begin position="34"/>
        <end position="58"/>
    </location>
</feature>
<feature type="topological domain" description="Cytoplasmic" evidence="8">
    <location>
        <begin position="59"/>
        <end position="70"/>
    </location>
</feature>
<feature type="transmembrane region" description="Helical; Name=2" evidence="1">
    <location>
        <begin position="71"/>
        <end position="93"/>
    </location>
</feature>
<feature type="topological domain" description="Extracellular" evidence="8">
    <location>
        <begin position="94"/>
        <end position="107"/>
    </location>
</feature>
<feature type="transmembrane region" description="Helical; Name=3" evidence="1">
    <location>
        <begin position="108"/>
        <end position="130"/>
    </location>
</feature>
<feature type="topological domain" description="Cytoplasmic" evidence="8">
    <location>
        <begin position="131"/>
        <end position="149"/>
    </location>
</feature>
<feature type="transmembrane region" description="Helical; Name=4" evidence="1">
    <location>
        <begin position="150"/>
        <end position="170"/>
    </location>
</feature>
<feature type="topological domain" description="Extracellular" evidence="8">
    <location>
        <begin position="171"/>
        <end position="199"/>
    </location>
</feature>
<feature type="transmembrane region" description="Helical; Name=5" evidence="1">
    <location>
        <begin position="200"/>
        <end position="221"/>
    </location>
</feature>
<feature type="topological domain" description="Cytoplasmic" evidence="8">
    <location>
        <begin position="222"/>
        <end position="249"/>
    </location>
</feature>
<feature type="transmembrane region" description="Helical; Name=6" evidence="1">
    <location>
        <begin position="250"/>
        <end position="271"/>
    </location>
</feature>
<feature type="topological domain" description="Extracellular" evidence="8">
    <location>
        <begin position="272"/>
        <end position="283"/>
    </location>
</feature>
<feature type="transmembrane region" description="Helical; Name=7" evidence="1">
    <location>
        <begin position="284"/>
        <end position="305"/>
    </location>
</feature>
<feature type="topological domain" description="Cytoplasmic" evidence="8">
    <location>
        <begin position="306"/>
        <end position="349"/>
    </location>
</feature>
<feature type="region of interest" description="Disordered" evidence="7">
    <location>
        <begin position="326"/>
        <end position="349"/>
    </location>
</feature>
<feature type="short sequence motif" description="'Ionic lock' involved in activated form stabilization" evidence="1">
    <location>
        <begin position="131"/>
        <end position="133"/>
    </location>
</feature>
<feature type="compositionally biased region" description="Low complexity" evidence="7">
    <location>
        <begin position="331"/>
        <end position="349"/>
    </location>
</feature>
<feature type="site" description="Plays an important role in the conformation switch to the active conformation" evidence="1">
    <location>
        <position position="110"/>
    </location>
</feature>
<feature type="modified residue" description="N6-(retinylidene)lysine" evidence="1">
    <location>
        <position position="293"/>
    </location>
</feature>
<feature type="lipid moiety-binding region" description="S-palmitoyl cysteine" evidence="1">
    <location>
        <position position="320"/>
    </location>
</feature>
<feature type="glycosylation site" description="N-linked (GlcNAc...) asparagine" evidence="5">
    <location>
        <position position="12"/>
    </location>
</feature>
<feature type="glycosylation site" description="N-linked (GlcNAc...) asparagine" evidence="5">
    <location>
        <position position="197"/>
    </location>
</feature>
<feature type="disulfide bond" evidence="6">
    <location>
        <begin position="107"/>
        <end position="184"/>
    </location>
</feature>
<feature type="non-terminal residue">
    <location>
        <position position="1"/>
    </location>
</feature>
<accession>P79798</accession>
<name>OPSD_MYRBE</name>
<keyword id="KW-0966">Cell projection</keyword>
<keyword id="KW-0157">Chromophore</keyword>
<keyword id="KW-1015">Disulfide bond</keyword>
<keyword id="KW-0297">G-protein coupled receptor</keyword>
<keyword id="KW-0325">Glycoprotein</keyword>
<keyword id="KW-0449">Lipoprotein</keyword>
<keyword id="KW-0472">Membrane</keyword>
<keyword id="KW-0564">Palmitate</keyword>
<keyword id="KW-0597">Phosphoprotein</keyword>
<keyword id="KW-0600">Photoreceptor protein</keyword>
<keyword id="KW-0675">Receptor</keyword>
<keyword id="KW-0681">Retinal protein</keyword>
<keyword id="KW-0716">Sensory transduction</keyword>
<keyword id="KW-0807">Transducer</keyword>
<keyword id="KW-0812">Transmembrane</keyword>
<keyword id="KW-1133">Transmembrane helix</keyword>
<keyword id="KW-0844">Vision</keyword>
<sequence>TEGPYFYIPMSNATGVVRSPYEYPQYYLVYPAAFAVLGAYMFFLIIFGFPVNFLTLYVTIEHKKLRTPLNYILLNLAVADLFMVIGGFTTTIYTSMHGYFVLGRLGCNLEGFSATLGGMISLWSLVVLAVERWVVVCKPMSNFRFGENHAIMGVTLTWAMGLACTVPPLVGWSRYIPEGMQCSCGIDYYTRAEGFNNESFVLYMFVCHFSFPLVVIFFCYGRLLCAVKEAAAAQQESETTQRAEREVTRMVILMVIGFLVCWLPYASVAWYIFTHQGSEFGPLFMTIPAFFAKSSAIYNPVIYICLNKQFRQCMLTTLFCGKNPFEEEEGASSTKTEASSASSSSVSPA</sequence>
<proteinExistence type="evidence at transcript level"/>
<comment type="function">
    <text evidence="1 2 3">Photoreceptor required for image-forming vision at low light intensity. While most salt water fish species use retinal as chromophore, most freshwater fish use 3-dehydroretinal, or a mixture of retinal and 3-dehydroretinal (By similarity). Light-induced isomerization of 11-cis to all-trans retinal triggers a conformational change that activates signaling via G-proteins. Subsequent receptor phosphorylation mediates displacement of the bound G-protein alpha subunit by arrestin and terminates signaling (By similarity).</text>
</comment>
<comment type="subcellular location">
    <subcellularLocation>
        <location evidence="2">Membrane</location>
        <topology evidence="2">Multi-pass membrane protein</topology>
    </subcellularLocation>
    <subcellularLocation>
        <location evidence="4">Cell projection</location>
        <location evidence="4">Cilium</location>
        <location evidence="4">Photoreceptor outer segment</location>
    </subcellularLocation>
    <text evidence="2">Synthesized in the inner segment (IS) of rod photoreceptor cells before vectorial transport to disk membranes in the rod outer segment (OS) photosensory cilia.</text>
</comment>
<comment type="PTM">
    <text evidence="1">Phosphorylated on some or all of the serine and threonine residues present in the C-terminal region.</text>
</comment>
<comment type="PTM">
    <text evidence="1">Contains one covalently linked retinal chromophore.</text>
</comment>
<comment type="similarity">
    <text evidence="6">Belongs to the G-protein coupled receptor 1 family. Opsin subfamily.</text>
</comment>
<evidence type="ECO:0000250" key="1">
    <source>
        <dbReference type="UniProtKB" id="P02699"/>
    </source>
</evidence>
<evidence type="ECO:0000250" key="2">
    <source>
        <dbReference type="UniProtKB" id="P08100"/>
    </source>
</evidence>
<evidence type="ECO:0000250" key="3">
    <source>
        <dbReference type="UniProtKB" id="P32309"/>
    </source>
</evidence>
<evidence type="ECO:0000250" key="4">
    <source>
        <dbReference type="UniProtKB" id="P35359"/>
    </source>
</evidence>
<evidence type="ECO:0000255" key="5"/>
<evidence type="ECO:0000255" key="6">
    <source>
        <dbReference type="PROSITE-ProRule" id="PRU00521"/>
    </source>
</evidence>
<evidence type="ECO:0000256" key="7">
    <source>
        <dbReference type="SAM" id="MobiDB-lite"/>
    </source>
</evidence>
<evidence type="ECO:0000305" key="8"/>
<protein>
    <recommendedName>
        <fullName>Rhodopsin</fullName>
    </recommendedName>
</protein>